<feature type="chain" id="PRO_0000375389" description="YcgL domain-containing protein Smlt4554">
    <location>
        <begin position="1"/>
        <end position="86"/>
    </location>
</feature>
<feature type="domain" description="YcgL" evidence="1">
    <location>
        <begin position="1"/>
        <end position="85"/>
    </location>
</feature>
<protein>
    <recommendedName>
        <fullName evidence="1">YcgL domain-containing protein Smlt4554</fullName>
    </recommendedName>
</protein>
<evidence type="ECO:0000255" key="1">
    <source>
        <dbReference type="HAMAP-Rule" id="MF_01866"/>
    </source>
</evidence>
<accession>B2FN98</accession>
<gene>
    <name type="ordered locus">Smlt4554</name>
</gene>
<name>Y4554_STRMK</name>
<reference key="1">
    <citation type="journal article" date="2008" name="Genome Biol.">
        <title>The complete genome, comparative and functional analysis of Stenotrophomonas maltophilia reveals an organism heavily shielded by drug resistance determinants.</title>
        <authorList>
            <person name="Crossman L.C."/>
            <person name="Gould V.C."/>
            <person name="Dow J.M."/>
            <person name="Vernikos G.S."/>
            <person name="Okazaki A."/>
            <person name="Sebaihia M."/>
            <person name="Saunders D."/>
            <person name="Arrowsmith C."/>
            <person name="Carver T."/>
            <person name="Peters N."/>
            <person name="Adlem E."/>
            <person name="Kerhornou A."/>
            <person name="Lord A."/>
            <person name="Murphy L."/>
            <person name="Seeger K."/>
            <person name="Squares R."/>
            <person name="Rutter S."/>
            <person name="Quail M.A."/>
            <person name="Rajandream M.A."/>
            <person name="Harris D."/>
            <person name="Churcher C."/>
            <person name="Bentley S.D."/>
            <person name="Parkhill J."/>
            <person name="Thomson N.R."/>
            <person name="Avison M.B."/>
        </authorList>
    </citation>
    <scope>NUCLEOTIDE SEQUENCE [LARGE SCALE GENOMIC DNA]</scope>
    <source>
        <strain>K279a</strain>
    </source>
</reference>
<organism>
    <name type="scientific">Stenotrophomonas maltophilia (strain K279a)</name>
    <dbReference type="NCBI Taxonomy" id="522373"/>
    <lineage>
        <taxon>Bacteria</taxon>
        <taxon>Pseudomonadati</taxon>
        <taxon>Pseudomonadota</taxon>
        <taxon>Gammaproteobacteria</taxon>
        <taxon>Lysobacterales</taxon>
        <taxon>Lysobacteraceae</taxon>
        <taxon>Stenotrophomonas</taxon>
        <taxon>Stenotrophomonas maltophilia group</taxon>
    </lineage>
</organism>
<keyword id="KW-1185">Reference proteome</keyword>
<dbReference type="EMBL" id="AM743169">
    <property type="protein sequence ID" value="CAQ47909.1"/>
    <property type="molecule type" value="Genomic_DNA"/>
</dbReference>
<dbReference type="RefSeq" id="WP_005411593.1">
    <property type="nucleotide sequence ID" value="NC_010943.1"/>
</dbReference>
<dbReference type="SMR" id="B2FN98"/>
<dbReference type="EnsemblBacteria" id="CAQ47909">
    <property type="protein sequence ID" value="CAQ47909"/>
    <property type="gene ID" value="Smlt4554"/>
</dbReference>
<dbReference type="KEGG" id="sml:Smlt4554"/>
<dbReference type="eggNOG" id="COG3100">
    <property type="taxonomic scope" value="Bacteria"/>
</dbReference>
<dbReference type="HOGENOM" id="CLU_155118_0_0_6"/>
<dbReference type="Proteomes" id="UP000008840">
    <property type="component" value="Chromosome"/>
</dbReference>
<dbReference type="Gene3D" id="3.10.510.20">
    <property type="entry name" value="YcgL domain"/>
    <property type="match status" value="1"/>
</dbReference>
<dbReference type="HAMAP" id="MF_01866">
    <property type="entry name" value="UPF0745"/>
    <property type="match status" value="1"/>
</dbReference>
<dbReference type="InterPro" id="IPR038068">
    <property type="entry name" value="YcgL-like_sf"/>
</dbReference>
<dbReference type="InterPro" id="IPR027354">
    <property type="entry name" value="YcgL_dom"/>
</dbReference>
<dbReference type="PANTHER" id="PTHR38109">
    <property type="entry name" value="PROTEIN YCGL"/>
    <property type="match status" value="1"/>
</dbReference>
<dbReference type="PANTHER" id="PTHR38109:SF1">
    <property type="entry name" value="PROTEIN YCGL"/>
    <property type="match status" value="1"/>
</dbReference>
<dbReference type="Pfam" id="PF05166">
    <property type="entry name" value="YcgL"/>
    <property type="match status" value="1"/>
</dbReference>
<dbReference type="SUPFAM" id="SSF160191">
    <property type="entry name" value="YcgL-like"/>
    <property type="match status" value="1"/>
</dbReference>
<dbReference type="PROSITE" id="PS51648">
    <property type="entry name" value="YCGL"/>
    <property type="match status" value="1"/>
</dbReference>
<sequence>MHAYVYKSQLKPDTYVYVPRRDDFSALPAPLLTSLGALTFVLDVALDAQRRLAQADPDKVRSDMSERGFYLQVPPSVASLMPRHYD</sequence>
<proteinExistence type="inferred from homology"/>